<proteinExistence type="inferred from homology"/>
<feature type="chain" id="PRO_0000152394" description="Imidazole glycerol phosphate synthase subunit HisH">
    <location>
        <begin position="1"/>
        <end position="206"/>
    </location>
</feature>
<feature type="domain" description="Glutamine amidotransferase type-1">
    <location>
        <begin position="5"/>
        <end position="206"/>
    </location>
</feature>
<feature type="active site" description="Nucleophile" evidence="1">
    <location>
        <position position="83"/>
    </location>
</feature>
<feature type="active site" evidence="1">
    <location>
        <position position="187"/>
    </location>
</feature>
<feature type="active site" evidence="1">
    <location>
        <position position="189"/>
    </location>
</feature>
<sequence>MRSKSVVVLDYGSGNLWSVQRALQRVGAAVEVTADSAAGAAADGLLVPGVGAFEACMAGLRKIAGERTIAERIVAGRPVLGVCVGMQILFARGVEFGVETTGCRQWPGVVTRLDAPVVPHMGWNVVDSASGSALFKGLDAGVRFYFVHSYAAQRWEGSSKALLTWATHQVPFLAAVEEGPLVATQFHPEKSGDAGATLLSNWLGEL</sequence>
<organism>
    <name type="scientific">Mycobacterium leprae (strain TN)</name>
    <dbReference type="NCBI Taxonomy" id="272631"/>
    <lineage>
        <taxon>Bacteria</taxon>
        <taxon>Bacillati</taxon>
        <taxon>Actinomycetota</taxon>
        <taxon>Actinomycetes</taxon>
        <taxon>Mycobacteriales</taxon>
        <taxon>Mycobacteriaceae</taxon>
        <taxon>Mycobacterium</taxon>
    </lineage>
</organism>
<reference key="1">
    <citation type="journal article" date="2001" name="Nature">
        <title>Massive gene decay in the leprosy bacillus.</title>
        <authorList>
            <person name="Cole S.T."/>
            <person name="Eiglmeier K."/>
            <person name="Parkhill J."/>
            <person name="James K.D."/>
            <person name="Thomson N.R."/>
            <person name="Wheeler P.R."/>
            <person name="Honore N."/>
            <person name="Garnier T."/>
            <person name="Churcher C.M."/>
            <person name="Harris D.E."/>
            <person name="Mungall K.L."/>
            <person name="Basham D."/>
            <person name="Brown D."/>
            <person name="Chillingworth T."/>
            <person name="Connor R."/>
            <person name="Davies R.M."/>
            <person name="Devlin K."/>
            <person name="Duthoy S."/>
            <person name="Feltwell T."/>
            <person name="Fraser A."/>
            <person name="Hamlin N."/>
            <person name="Holroyd S."/>
            <person name="Hornsby T."/>
            <person name="Jagels K."/>
            <person name="Lacroix C."/>
            <person name="Maclean J."/>
            <person name="Moule S."/>
            <person name="Murphy L.D."/>
            <person name="Oliver K."/>
            <person name="Quail M.A."/>
            <person name="Rajandream M.A."/>
            <person name="Rutherford K.M."/>
            <person name="Rutter S."/>
            <person name="Seeger K."/>
            <person name="Simon S."/>
            <person name="Simmonds M."/>
            <person name="Skelton J."/>
            <person name="Squares R."/>
            <person name="Squares S."/>
            <person name="Stevens K."/>
            <person name="Taylor K."/>
            <person name="Whitehead S."/>
            <person name="Woodward J.R."/>
            <person name="Barrell B.G."/>
        </authorList>
    </citation>
    <scope>NUCLEOTIDE SEQUENCE [LARGE SCALE GENOMIC DNA]</scope>
    <source>
        <strain>TN</strain>
    </source>
</reference>
<accession>Q9X7C0</accession>
<name>HIS5_MYCLE</name>
<dbReference type="EC" id="4.3.2.10"/>
<dbReference type="EC" id="3.5.1.2"/>
<dbReference type="EMBL" id="AL049913">
    <property type="protein sequence ID" value="CAB43169.1"/>
    <property type="molecule type" value="Genomic_DNA"/>
</dbReference>
<dbReference type="EMBL" id="AL583921">
    <property type="protein sequence ID" value="CAC31641.1"/>
    <property type="molecule type" value="Genomic_DNA"/>
</dbReference>
<dbReference type="PIR" id="T45249">
    <property type="entry name" value="T45249"/>
</dbReference>
<dbReference type="RefSeq" id="NP_301909.1">
    <property type="nucleotide sequence ID" value="NC_002677.1"/>
</dbReference>
<dbReference type="RefSeq" id="WP_010908230.1">
    <property type="nucleotide sequence ID" value="NC_002677.1"/>
</dbReference>
<dbReference type="SMR" id="Q9X7C0"/>
<dbReference type="STRING" id="272631.gene:17575092"/>
<dbReference type="MEROPS" id="C26.965"/>
<dbReference type="KEGG" id="mle:ML1260"/>
<dbReference type="PATRIC" id="fig|272631.5.peg.2321"/>
<dbReference type="Leproma" id="ML1260"/>
<dbReference type="eggNOG" id="COG0118">
    <property type="taxonomic scope" value="Bacteria"/>
</dbReference>
<dbReference type="HOGENOM" id="CLU_071837_1_0_11"/>
<dbReference type="OrthoDB" id="9807137at2"/>
<dbReference type="UniPathway" id="UPA00031">
    <property type="reaction ID" value="UER00010"/>
</dbReference>
<dbReference type="Proteomes" id="UP000000806">
    <property type="component" value="Chromosome"/>
</dbReference>
<dbReference type="GO" id="GO:0005737">
    <property type="term" value="C:cytoplasm"/>
    <property type="evidence" value="ECO:0007669"/>
    <property type="project" value="UniProtKB-SubCell"/>
</dbReference>
<dbReference type="GO" id="GO:0004359">
    <property type="term" value="F:glutaminase activity"/>
    <property type="evidence" value="ECO:0007669"/>
    <property type="project" value="UniProtKB-EC"/>
</dbReference>
<dbReference type="GO" id="GO:0000107">
    <property type="term" value="F:imidazoleglycerol-phosphate synthase activity"/>
    <property type="evidence" value="ECO:0007669"/>
    <property type="project" value="UniProtKB-UniRule"/>
</dbReference>
<dbReference type="GO" id="GO:0016829">
    <property type="term" value="F:lyase activity"/>
    <property type="evidence" value="ECO:0007669"/>
    <property type="project" value="UniProtKB-KW"/>
</dbReference>
<dbReference type="GO" id="GO:0000105">
    <property type="term" value="P:L-histidine biosynthetic process"/>
    <property type="evidence" value="ECO:0007669"/>
    <property type="project" value="UniProtKB-UniRule"/>
</dbReference>
<dbReference type="CDD" id="cd01748">
    <property type="entry name" value="GATase1_IGP_Synthase"/>
    <property type="match status" value="1"/>
</dbReference>
<dbReference type="FunFam" id="3.40.50.880:FF:000056">
    <property type="entry name" value="Imidazole glycerol phosphate synthase subunit HisH"/>
    <property type="match status" value="1"/>
</dbReference>
<dbReference type="Gene3D" id="3.40.50.880">
    <property type="match status" value="1"/>
</dbReference>
<dbReference type="HAMAP" id="MF_00278">
    <property type="entry name" value="HisH"/>
    <property type="match status" value="1"/>
</dbReference>
<dbReference type="InterPro" id="IPR029062">
    <property type="entry name" value="Class_I_gatase-like"/>
</dbReference>
<dbReference type="InterPro" id="IPR017926">
    <property type="entry name" value="GATASE"/>
</dbReference>
<dbReference type="InterPro" id="IPR010139">
    <property type="entry name" value="Imidazole-glycPsynth_HisH"/>
</dbReference>
<dbReference type="NCBIfam" id="TIGR01855">
    <property type="entry name" value="IMP_synth_hisH"/>
    <property type="match status" value="1"/>
</dbReference>
<dbReference type="PANTHER" id="PTHR42701">
    <property type="entry name" value="IMIDAZOLE GLYCEROL PHOSPHATE SYNTHASE SUBUNIT HISH"/>
    <property type="match status" value="1"/>
</dbReference>
<dbReference type="PANTHER" id="PTHR42701:SF1">
    <property type="entry name" value="IMIDAZOLE GLYCEROL PHOSPHATE SYNTHASE SUBUNIT HISH"/>
    <property type="match status" value="1"/>
</dbReference>
<dbReference type="Pfam" id="PF00117">
    <property type="entry name" value="GATase"/>
    <property type="match status" value="1"/>
</dbReference>
<dbReference type="PIRSF" id="PIRSF000495">
    <property type="entry name" value="Amidotransf_hisH"/>
    <property type="match status" value="1"/>
</dbReference>
<dbReference type="SUPFAM" id="SSF52317">
    <property type="entry name" value="Class I glutamine amidotransferase-like"/>
    <property type="match status" value="1"/>
</dbReference>
<dbReference type="PROSITE" id="PS51273">
    <property type="entry name" value="GATASE_TYPE_1"/>
    <property type="match status" value="1"/>
</dbReference>
<protein>
    <recommendedName>
        <fullName>Imidazole glycerol phosphate synthase subunit HisH</fullName>
        <ecNumber>4.3.2.10</ecNumber>
    </recommendedName>
    <alternativeName>
        <fullName>IGP synthase glutaminase subunit</fullName>
        <ecNumber>3.5.1.2</ecNumber>
    </alternativeName>
    <alternativeName>
        <fullName>IGP synthase subunit HisH</fullName>
    </alternativeName>
    <alternativeName>
        <fullName>ImGP synthase subunit HisH</fullName>
        <shortName>IGPS subunit HisH</shortName>
    </alternativeName>
</protein>
<evidence type="ECO:0000250" key="1"/>
<gene>
    <name type="primary">hisH</name>
    <name type="ordered locus">ML1260</name>
    <name type="ORF">MLCB1610.23</name>
</gene>
<keyword id="KW-0028">Amino-acid biosynthesis</keyword>
<keyword id="KW-0963">Cytoplasm</keyword>
<keyword id="KW-0315">Glutamine amidotransferase</keyword>
<keyword id="KW-0368">Histidine biosynthesis</keyword>
<keyword id="KW-0378">Hydrolase</keyword>
<keyword id="KW-0456">Lyase</keyword>
<keyword id="KW-1185">Reference proteome</keyword>
<comment type="function">
    <text evidence="1">IGPS catalyzes the conversion of PRFAR and glutamine to IGP, AICAR and glutamate. The HisH subunit catalyzes the hydrolysis of glutamine to glutamate and ammonia as part of the synthesis of IGP and AICAR. The resulting ammonia molecule is channeled to the active site of HisF (By similarity).</text>
</comment>
<comment type="catalytic activity">
    <reaction>
        <text>5-[(5-phospho-1-deoxy-D-ribulos-1-ylimino)methylamino]-1-(5-phospho-beta-D-ribosyl)imidazole-4-carboxamide + L-glutamine = D-erythro-1-(imidazol-4-yl)glycerol 3-phosphate + 5-amino-1-(5-phospho-beta-D-ribosyl)imidazole-4-carboxamide + L-glutamate + H(+)</text>
        <dbReference type="Rhea" id="RHEA:24793"/>
        <dbReference type="ChEBI" id="CHEBI:15378"/>
        <dbReference type="ChEBI" id="CHEBI:29985"/>
        <dbReference type="ChEBI" id="CHEBI:58278"/>
        <dbReference type="ChEBI" id="CHEBI:58359"/>
        <dbReference type="ChEBI" id="CHEBI:58475"/>
        <dbReference type="ChEBI" id="CHEBI:58525"/>
        <dbReference type="EC" id="4.3.2.10"/>
    </reaction>
</comment>
<comment type="catalytic activity">
    <reaction>
        <text>L-glutamine + H2O = L-glutamate + NH4(+)</text>
        <dbReference type="Rhea" id="RHEA:15889"/>
        <dbReference type="ChEBI" id="CHEBI:15377"/>
        <dbReference type="ChEBI" id="CHEBI:28938"/>
        <dbReference type="ChEBI" id="CHEBI:29985"/>
        <dbReference type="ChEBI" id="CHEBI:58359"/>
        <dbReference type="EC" id="3.5.1.2"/>
    </reaction>
</comment>
<comment type="pathway">
    <text>Amino-acid biosynthesis; L-histidine biosynthesis; L-histidine from 5-phospho-alpha-D-ribose 1-diphosphate: step 5/9.</text>
</comment>
<comment type="subunit">
    <text evidence="1">Heterodimer of HisH and HisF.</text>
</comment>
<comment type="subcellular location">
    <subcellularLocation>
        <location evidence="1">Cytoplasm</location>
    </subcellularLocation>
</comment>